<name>MTRC_METJA</name>
<gene>
    <name type="primary">mtrC</name>
    <name type="ordered locus">MJ0849</name>
</gene>
<proteinExistence type="inferred from homology"/>
<keyword id="KW-1003">Cell membrane</keyword>
<keyword id="KW-0472">Membrane</keyword>
<keyword id="KW-0484">Methanogenesis</keyword>
<keyword id="KW-0489">Methyltransferase</keyword>
<keyword id="KW-0554">One-carbon metabolism</keyword>
<keyword id="KW-1185">Reference proteome</keyword>
<keyword id="KW-0808">Transferase</keyword>
<keyword id="KW-1278">Translocase</keyword>
<keyword id="KW-0812">Transmembrane</keyword>
<keyword id="KW-1133">Transmembrane helix</keyword>
<feature type="chain" id="PRO_0000147522" description="Tetrahydromethanopterin S-methyltransferase subunit C">
    <location>
        <begin position="1"/>
        <end position="265"/>
    </location>
</feature>
<feature type="transmembrane region" description="Helical" evidence="2">
    <location>
        <begin position="18"/>
        <end position="38"/>
    </location>
</feature>
<feature type="transmembrane region" description="Helical" evidence="2">
    <location>
        <begin position="41"/>
        <end position="61"/>
    </location>
</feature>
<feature type="transmembrane region" description="Helical" evidence="2">
    <location>
        <begin position="75"/>
        <end position="95"/>
    </location>
</feature>
<feature type="transmembrane region" description="Helical" evidence="2">
    <location>
        <begin position="100"/>
        <end position="120"/>
    </location>
</feature>
<feature type="transmembrane region" description="Helical" evidence="2">
    <location>
        <begin position="141"/>
        <end position="161"/>
    </location>
</feature>
<feature type="transmembrane region" description="Helical" evidence="2">
    <location>
        <begin position="175"/>
        <end position="195"/>
    </location>
</feature>
<feature type="transmembrane region" description="Helical" evidence="2">
    <location>
        <begin position="202"/>
        <end position="222"/>
    </location>
</feature>
<feature type="transmembrane region" description="Helical" evidence="2">
    <location>
        <begin position="224"/>
        <end position="244"/>
    </location>
</feature>
<organism>
    <name type="scientific">Methanocaldococcus jannaschii (strain ATCC 43067 / DSM 2661 / JAL-1 / JCM 10045 / NBRC 100440)</name>
    <name type="common">Methanococcus jannaschii</name>
    <dbReference type="NCBI Taxonomy" id="243232"/>
    <lineage>
        <taxon>Archaea</taxon>
        <taxon>Methanobacteriati</taxon>
        <taxon>Methanobacteriota</taxon>
        <taxon>Methanomada group</taxon>
        <taxon>Methanococci</taxon>
        <taxon>Methanococcales</taxon>
        <taxon>Methanocaldococcaceae</taxon>
        <taxon>Methanocaldococcus</taxon>
    </lineage>
</organism>
<protein>
    <recommendedName>
        <fullName>Tetrahydromethanopterin S-methyltransferase subunit C</fullName>
        <ecNumber>7.2.1.4</ecNumber>
    </recommendedName>
    <alternativeName>
        <fullName>N5-methyltetrahydromethanopterin--coenzyme M methyltransferase subunit C</fullName>
    </alternativeName>
</protein>
<evidence type="ECO:0000250" key="1"/>
<evidence type="ECO:0000255" key="2"/>
<evidence type="ECO:0000305" key="3"/>
<accession>Q58259</accession>
<dbReference type="EC" id="7.2.1.4"/>
<dbReference type="EMBL" id="L77117">
    <property type="protein sequence ID" value="AAB98854.1"/>
    <property type="molecule type" value="Genomic_DNA"/>
</dbReference>
<dbReference type="PIR" id="A64406">
    <property type="entry name" value="A64406"/>
</dbReference>
<dbReference type="RefSeq" id="WP_010870363.1">
    <property type="nucleotide sequence ID" value="NC_000909.1"/>
</dbReference>
<dbReference type="SMR" id="Q58259"/>
<dbReference type="FunCoup" id="Q58259">
    <property type="interactions" value="90"/>
</dbReference>
<dbReference type="STRING" id="243232.MJ_0849"/>
<dbReference type="PaxDb" id="243232-MJ_0849"/>
<dbReference type="DNASU" id="1451737"/>
<dbReference type="EnsemblBacteria" id="AAB98854">
    <property type="protein sequence ID" value="AAB98854"/>
    <property type="gene ID" value="MJ_0849"/>
</dbReference>
<dbReference type="GeneID" id="1451737"/>
<dbReference type="KEGG" id="mja:MJ_0849"/>
<dbReference type="eggNOG" id="arCOG04868">
    <property type="taxonomic scope" value="Archaea"/>
</dbReference>
<dbReference type="HOGENOM" id="CLU_092286_0_0_2"/>
<dbReference type="InParanoid" id="Q58259"/>
<dbReference type="OrthoDB" id="60591at2157"/>
<dbReference type="PhylomeDB" id="Q58259"/>
<dbReference type="UniPathway" id="UPA00640">
    <property type="reaction ID" value="UER00698"/>
</dbReference>
<dbReference type="Proteomes" id="UP000000805">
    <property type="component" value="Chromosome"/>
</dbReference>
<dbReference type="GO" id="GO:0005886">
    <property type="term" value="C:plasma membrane"/>
    <property type="evidence" value="ECO:0007669"/>
    <property type="project" value="UniProtKB-SubCell"/>
</dbReference>
<dbReference type="GO" id="GO:0030269">
    <property type="term" value="F:tetrahydromethanopterin S-methyltransferase activity"/>
    <property type="evidence" value="ECO:0007669"/>
    <property type="project" value="UniProtKB-UniRule"/>
</dbReference>
<dbReference type="GO" id="GO:0019386">
    <property type="term" value="P:methanogenesis, from carbon dioxide"/>
    <property type="evidence" value="ECO:0007669"/>
    <property type="project" value="UniProtKB-UniRule"/>
</dbReference>
<dbReference type="GO" id="GO:0032259">
    <property type="term" value="P:methylation"/>
    <property type="evidence" value="ECO:0007669"/>
    <property type="project" value="UniProtKB-KW"/>
</dbReference>
<dbReference type="GO" id="GO:0006730">
    <property type="term" value="P:one-carbon metabolic process"/>
    <property type="evidence" value="ECO:0007669"/>
    <property type="project" value="UniProtKB-UniRule"/>
</dbReference>
<dbReference type="HAMAP" id="MF_01096">
    <property type="entry name" value="MtrC"/>
    <property type="match status" value="1"/>
</dbReference>
<dbReference type="InterPro" id="IPR005865">
    <property type="entry name" value="THM_MeTrfase_su_C"/>
</dbReference>
<dbReference type="NCBIfam" id="TIGR01148">
    <property type="entry name" value="mtrC"/>
    <property type="match status" value="1"/>
</dbReference>
<dbReference type="Pfam" id="PF04211">
    <property type="entry name" value="MtrC"/>
    <property type="match status" value="1"/>
</dbReference>
<dbReference type="PIRSF" id="PIRSF006530">
    <property type="entry name" value="MtrC"/>
    <property type="match status" value="1"/>
</dbReference>
<sequence length="265" mass="27804">MSHGGGGHAAELYPEEQIFAVGIALSLVGCYLANFLSPYGLGMLIGGLLASAACVAGANTVRKVAAYGLGTGVPSIGMVSLGMGTLAAVAGVLIPDYFNLPYLVAPIITLIVSAVIGYIVGRLTVNPVGMKIPIMVRSMTFLSIAGAMALLGFTVAYVGSLEPQKYIDYALNNGMMALAFIAAGMAILHPFNACLGPNESHKRTLTLAVACGFITWFVFSVVKLDIVSIIVSIILWAIVYVKFVKMSFKDACAVLHVPEIPKKEE</sequence>
<reference key="1">
    <citation type="journal article" date="1996" name="Science">
        <title>Complete genome sequence of the methanogenic archaeon, Methanococcus jannaschii.</title>
        <authorList>
            <person name="Bult C.J."/>
            <person name="White O."/>
            <person name="Olsen G.J."/>
            <person name="Zhou L."/>
            <person name="Fleischmann R.D."/>
            <person name="Sutton G.G."/>
            <person name="Blake J.A."/>
            <person name="FitzGerald L.M."/>
            <person name="Clayton R.A."/>
            <person name="Gocayne J.D."/>
            <person name="Kerlavage A.R."/>
            <person name="Dougherty B.A."/>
            <person name="Tomb J.-F."/>
            <person name="Adams M.D."/>
            <person name="Reich C.I."/>
            <person name="Overbeek R."/>
            <person name="Kirkness E.F."/>
            <person name="Weinstock K.G."/>
            <person name="Merrick J.M."/>
            <person name="Glodek A."/>
            <person name="Scott J.L."/>
            <person name="Geoghagen N.S.M."/>
            <person name="Weidman J.F."/>
            <person name="Fuhrmann J.L."/>
            <person name="Nguyen D."/>
            <person name="Utterback T.R."/>
            <person name="Kelley J.M."/>
            <person name="Peterson J.D."/>
            <person name="Sadow P.W."/>
            <person name="Hanna M.C."/>
            <person name="Cotton M.D."/>
            <person name="Roberts K.M."/>
            <person name="Hurst M.A."/>
            <person name="Kaine B.P."/>
            <person name="Borodovsky M."/>
            <person name="Klenk H.-P."/>
            <person name="Fraser C.M."/>
            <person name="Smith H.O."/>
            <person name="Woese C.R."/>
            <person name="Venter J.C."/>
        </authorList>
    </citation>
    <scope>NUCLEOTIDE SEQUENCE [LARGE SCALE GENOMIC DNA]</scope>
    <source>
        <strain>ATCC 43067 / DSM 2661 / JAL-1 / JCM 10045 / NBRC 100440</strain>
    </source>
</reference>
<comment type="function">
    <text evidence="1">Part of a complex that catalyzes the formation of methyl-coenzyme M and tetrahydromethanopterin from coenzyme M and methyl-tetrahydromethanopterin. This is an energy-conserving, sodium-ion translocating step.</text>
</comment>
<comment type="catalytic activity">
    <reaction>
        <text>5-methyl-5,6,7,8-tetrahydromethanopterin + coenzyme M + 2 Na(+)(in) = 5,6,7,8-tetrahydromethanopterin + methyl-coenzyme M + 2 Na(+)(out)</text>
        <dbReference type="Rhea" id="RHEA:53492"/>
        <dbReference type="ChEBI" id="CHEBI:29101"/>
        <dbReference type="ChEBI" id="CHEBI:58103"/>
        <dbReference type="ChEBI" id="CHEBI:58116"/>
        <dbReference type="ChEBI" id="CHEBI:58286"/>
        <dbReference type="ChEBI" id="CHEBI:58319"/>
        <dbReference type="EC" id="7.2.1.4"/>
    </reaction>
</comment>
<comment type="pathway">
    <text>One-carbon metabolism; methanogenesis from CO(2); methyl-coenzyme M from 5,10-methylene-5,6,7,8-tetrahydromethanopterin: step 2/2.</text>
</comment>
<comment type="subunit">
    <text evidence="1">The complex is composed of 8 subunits; MtrA, MtrB, MtrC, MtrD, MtrE, MtrF, MtrG and MtrH.</text>
</comment>
<comment type="subcellular location">
    <subcellularLocation>
        <location evidence="3">Cell membrane</location>
        <topology evidence="3">Multi-pass membrane protein</topology>
    </subcellularLocation>
</comment>
<comment type="similarity">
    <text evidence="3">Belongs to the MtrC family.</text>
</comment>